<proteinExistence type="inferred from homology"/>
<comment type="subcellular location">
    <subcellularLocation>
        <location evidence="1">Membrane</location>
        <topology evidence="1">Single-pass membrane protein</topology>
    </subcellularLocation>
</comment>
<sequence length="56" mass="5955">MARAPQPRRGPAAPGNALRALLRCNLPPGAQRVVVSAVLALLVLINVVLIFLLAFR</sequence>
<accession>A0A1B0GW54</accession>
<organism>
    <name type="scientific">Homo sapiens</name>
    <name type="common">Human</name>
    <dbReference type="NCBI Taxonomy" id="9606"/>
    <lineage>
        <taxon>Eukaryota</taxon>
        <taxon>Metazoa</taxon>
        <taxon>Chordata</taxon>
        <taxon>Craniata</taxon>
        <taxon>Vertebrata</taxon>
        <taxon>Euteleostomi</taxon>
        <taxon>Mammalia</taxon>
        <taxon>Eutheria</taxon>
        <taxon>Euarchontoglires</taxon>
        <taxon>Primates</taxon>
        <taxon>Haplorrhini</taxon>
        <taxon>Catarrhini</taxon>
        <taxon>Hominidae</taxon>
        <taxon>Homo</taxon>
    </lineage>
</organism>
<gene>
    <name evidence="2" type="primary">SMIM39</name>
</gene>
<keyword id="KW-0472">Membrane</keyword>
<keyword id="KW-1185">Reference proteome</keyword>
<keyword id="KW-0812">Transmembrane</keyword>
<keyword id="KW-1133">Transmembrane helix</keyword>
<feature type="chain" id="PRO_0000446071" description="Small integral membrane protein 39">
    <location>
        <begin position="1"/>
        <end position="56"/>
    </location>
</feature>
<feature type="transmembrane region" description="Helical" evidence="1">
    <location>
        <begin position="33"/>
        <end position="53"/>
    </location>
</feature>
<name>SIM39_HUMAN</name>
<evidence type="ECO:0000255" key="1"/>
<evidence type="ECO:0000312" key="2">
    <source>
        <dbReference type="HGNC" id="HGNC:54076"/>
    </source>
</evidence>
<dbReference type="EMBL" id="AC009477">
    <property type="status" value="NOT_ANNOTATED_CDS"/>
    <property type="molecule type" value="Genomic_DNA"/>
</dbReference>
<dbReference type="CCDS" id="CCDS92867.1"/>
<dbReference type="RefSeq" id="NP_001401823.1">
    <property type="nucleotide sequence ID" value="NM_001414894.1"/>
</dbReference>
<dbReference type="SMR" id="A0A1B0GW54"/>
<dbReference type="BioMuta" id="ENSG00000284479"/>
<dbReference type="MassIVE" id="A0A1B0GW54"/>
<dbReference type="PeptideAtlas" id="A0A1B0GW54"/>
<dbReference type="Ensembl" id="ENST00000635976.2">
    <property type="protein sequence ID" value="ENSP00000490782.1"/>
    <property type="gene ID" value="ENSG00000284479.3"/>
</dbReference>
<dbReference type="Ensembl" id="ENST00000710632.1">
    <property type="protein sequence ID" value="ENSP00000518387.1"/>
    <property type="gene ID" value="ENSG00000284479.3"/>
</dbReference>
<dbReference type="Ensembl" id="ENST00000711663.1">
    <property type="protein sequence ID" value="ENSP00000518825.1"/>
    <property type="gene ID" value="ENSG00000284479.3"/>
</dbReference>
<dbReference type="GeneID" id="113523639"/>
<dbReference type="MANE-Select" id="ENST00000711663.1">
    <property type="protein sequence ID" value="ENSP00000518825.1"/>
    <property type="RefSeq nucleotide sequence ID" value="NM_001414894.1"/>
    <property type="RefSeq protein sequence ID" value="NP_001401823.1"/>
</dbReference>
<dbReference type="AGR" id="HGNC:54076"/>
<dbReference type="GeneCards" id="SMIM39"/>
<dbReference type="HGNC" id="HGNC:54076">
    <property type="gene designation" value="SMIM39"/>
</dbReference>
<dbReference type="HPA" id="ENSG00000284479">
    <property type="expression patterns" value="Tissue enhanced (adipose)"/>
</dbReference>
<dbReference type="neXtProt" id="NX_A0A1B0GW54"/>
<dbReference type="VEuPathDB" id="HostDB:ENSG00000284479"/>
<dbReference type="GeneTree" id="ENSGT00900000143180"/>
<dbReference type="InParanoid" id="A0A1B0GW54"/>
<dbReference type="OMA" id="XGNALRA"/>
<dbReference type="PAN-GO" id="A0A1B0GW54">
    <property type="GO annotations" value="0 GO annotations based on evolutionary models"/>
</dbReference>
<dbReference type="PRO" id="PR:A0A1B0GW54"/>
<dbReference type="Proteomes" id="UP000005640">
    <property type="component" value="Chromosome 2"/>
</dbReference>
<dbReference type="RNAct" id="A0A1B0GW54">
    <property type="molecule type" value="protein"/>
</dbReference>
<dbReference type="Bgee" id="ENSG00000284479">
    <property type="expression patterns" value="Expressed in cortical plate and 70 other cell types or tissues"/>
</dbReference>
<dbReference type="GO" id="GO:0016020">
    <property type="term" value="C:membrane"/>
    <property type="evidence" value="ECO:0007669"/>
    <property type="project" value="UniProtKB-SubCell"/>
</dbReference>
<protein>
    <recommendedName>
        <fullName evidence="2">Small integral membrane protein 39</fullName>
    </recommendedName>
</protein>
<reference key="1">
    <citation type="journal article" date="2005" name="Nature">
        <title>Generation and annotation of the DNA sequences of human chromosomes 2 and 4.</title>
        <authorList>
            <person name="Hillier L.W."/>
            <person name="Graves T.A."/>
            <person name="Fulton R.S."/>
            <person name="Fulton L.A."/>
            <person name="Pepin K.H."/>
            <person name="Minx P."/>
            <person name="Wagner-McPherson C."/>
            <person name="Layman D."/>
            <person name="Wylie K."/>
            <person name="Sekhon M."/>
            <person name="Becker M.C."/>
            <person name="Fewell G.A."/>
            <person name="Delehaunty K.D."/>
            <person name="Miner T.L."/>
            <person name="Nash W.E."/>
            <person name="Kremitzki C."/>
            <person name="Oddy L."/>
            <person name="Du H."/>
            <person name="Sun H."/>
            <person name="Bradshaw-Cordum H."/>
            <person name="Ali J."/>
            <person name="Carter J."/>
            <person name="Cordes M."/>
            <person name="Harris A."/>
            <person name="Isak A."/>
            <person name="van Brunt A."/>
            <person name="Nguyen C."/>
            <person name="Du F."/>
            <person name="Courtney L."/>
            <person name="Kalicki J."/>
            <person name="Ozersky P."/>
            <person name="Abbott S."/>
            <person name="Armstrong J."/>
            <person name="Belter E.A."/>
            <person name="Caruso L."/>
            <person name="Cedroni M."/>
            <person name="Cotton M."/>
            <person name="Davidson T."/>
            <person name="Desai A."/>
            <person name="Elliott G."/>
            <person name="Erb T."/>
            <person name="Fronick C."/>
            <person name="Gaige T."/>
            <person name="Haakenson W."/>
            <person name="Haglund K."/>
            <person name="Holmes A."/>
            <person name="Harkins R."/>
            <person name="Kim K."/>
            <person name="Kruchowski S.S."/>
            <person name="Strong C.M."/>
            <person name="Grewal N."/>
            <person name="Goyea E."/>
            <person name="Hou S."/>
            <person name="Levy A."/>
            <person name="Martinka S."/>
            <person name="Mead K."/>
            <person name="McLellan M.D."/>
            <person name="Meyer R."/>
            <person name="Randall-Maher J."/>
            <person name="Tomlinson C."/>
            <person name="Dauphin-Kohlberg S."/>
            <person name="Kozlowicz-Reilly A."/>
            <person name="Shah N."/>
            <person name="Swearengen-Shahid S."/>
            <person name="Snider J."/>
            <person name="Strong J.T."/>
            <person name="Thompson J."/>
            <person name="Yoakum M."/>
            <person name="Leonard S."/>
            <person name="Pearman C."/>
            <person name="Trani L."/>
            <person name="Radionenko M."/>
            <person name="Waligorski J.E."/>
            <person name="Wang C."/>
            <person name="Rock S.M."/>
            <person name="Tin-Wollam A.-M."/>
            <person name="Maupin R."/>
            <person name="Latreille P."/>
            <person name="Wendl M.C."/>
            <person name="Yang S.-P."/>
            <person name="Pohl C."/>
            <person name="Wallis J.W."/>
            <person name="Spieth J."/>
            <person name="Bieri T.A."/>
            <person name="Berkowicz N."/>
            <person name="Nelson J.O."/>
            <person name="Osborne J."/>
            <person name="Ding L."/>
            <person name="Meyer R."/>
            <person name="Sabo A."/>
            <person name="Shotland Y."/>
            <person name="Sinha P."/>
            <person name="Wohldmann P.E."/>
            <person name="Cook L.L."/>
            <person name="Hickenbotham M.T."/>
            <person name="Eldred J."/>
            <person name="Williams D."/>
            <person name="Jones T.A."/>
            <person name="She X."/>
            <person name="Ciccarelli F.D."/>
            <person name="Izaurralde E."/>
            <person name="Taylor J."/>
            <person name="Schmutz J."/>
            <person name="Myers R.M."/>
            <person name="Cox D.R."/>
            <person name="Huang X."/>
            <person name="McPherson J.D."/>
            <person name="Mardis E.R."/>
            <person name="Clifton S.W."/>
            <person name="Warren W.C."/>
            <person name="Chinwalla A.T."/>
            <person name="Eddy S.R."/>
            <person name="Marra M.A."/>
            <person name="Ovcharenko I."/>
            <person name="Furey T.S."/>
            <person name="Miller W."/>
            <person name="Eichler E.E."/>
            <person name="Bork P."/>
            <person name="Suyama M."/>
            <person name="Torrents D."/>
            <person name="Waterston R.H."/>
            <person name="Wilson R.K."/>
        </authorList>
    </citation>
    <scope>NUCLEOTIDE SEQUENCE [LARGE SCALE GENOMIC DNA]</scope>
</reference>